<reference key="1">
    <citation type="journal article" date="2002" name="Proc. Natl. Acad. Sci. U.S.A.">
        <title>Extensive mosaic structure revealed by the complete genome sequence of uropathogenic Escherichia coli.</title>
        <authorList>
            <person name="Welch R.A."/>
            <person name="Burland V."/>
            <person name="Plunkett G. III"/>
            <person name="Redford P."/>
            <person name="Roesch P."/>
            <person name="Rasko D."/>
            <person name="Buckles E.L."/>
            <person name="Liou S.-R."/>
            <person name="Boutin A."/>
            <person name="Hackett J."/>
            <person name="Stroud D."/>
            <person name="Mayhew G.F."/>
            <person name="Rose D.J."/>
            <person name="Zhou S."/>
            <person name="Schwartz D.C."/>
            <person name="Perna N.T."/>
            <person name="Mobley H.L.T."/>
            <person name="Donnenberg M.S."/>
            <person name="Blattner F.R."/>
        </authorList>
    </citation>
    <scope>NUCLEOTIDE SEQUENCE [LARGE SCALE GENOMIC DNA]</scope>
    <source>
        <strain>CFT073 / ATCC 700928 / UPEC</strain>
    </source>
</reference>
<proteinExistence type="inferred from homology"/>
<accession>Q8CWA2</accession>
<evidence type="ECO:0000250" key="1"/>
<evidence type="ECO:0000255" key="2"/>
<evidence type="ECO:0000305" key="3"/>
<organism>
    <name type="scientific">Escherichia coli O6:H1 (strain CFT073 / ATCC 700928 / UPEC)</name>
    <dbReference type="NCBI Taxonomy" id="199310"/>
    <lineage>
        <taxon>Bacteria</taxon>
        <taxon>Pseudomonadati</taxon>
        <taxon>Pseudomonadota</taxon>
        <taxon>Gammaproteobacteria</taxon>
        <taxon>Enterobacterales</taxon>
        <taxon>Enterobacteriaceae</taxon>
        <taxon>Escherichia</taxon>
    </lineage>
</organism>
<protein>
    <recommendedName>
        <fullName>Cation efflux system protein CusB</fullName>
    </recommendedName>
</protein>
<gene>
    <name type="primary">cusB</name>
    <name type="ordered locus">c0660</name>
</gene>
<keyword id="KW-0186">Copper</keyword>
<keyword id="KW-0187">Copper transport</keyword>
<keyword id="KW-0406">Ion transport</keyword>
<keyword id="KW-1185">Reference proteome</keyword>
<keyword id="KW-0732">Signal</keyword>
<keyword id="KW-0813">Transport</keyword>
<dbReference type="EMBL" id="AE014075">
    <property type="protein sequence ID" value="AAN79135.1"/>
    <property type="molecule type" value="Genomic_DNA"/>
</dbReference>
<dbReference type="RefSeq" id="WP_000717136.1">
    <property type="nucleotide sequence ID" value="NZ_CP051263.1"/>
</dbReference>
<dbReference type="SMR" id="Q8CWA2"/>
<dbReference type="STRING" id="199310.c0660"/>
<dbReference type="KEGG" id="ecc:c0660"/>
<dbReference type="eggNOG" id="COG0845">
    <property type="taxonomic scope" value="Bacteria"/>
</dbReference>
<dbReference type="HOGENOM" id="CLU_018816_13_1_6"/>
<dbReference type="BioCyc" id="ECOL199310:C0660-MONOMER"/>
<dbReference type="Proteomes" id="UP000001410">
    <property type="component" value="Chromosome"/>
</dbReference>
<dbReference type="GO" id="GO:0016020">
    <property type="term" value="C:membrane"/>
    <property type="evidence" value="ECO:0007669"/>
    <property type="project" value="InterPro"/>
</dbReference>
<dbReference type="GO" id="GO:0030288">
    <property type="term" value="C:outer membrane-bounded periplasmic space"/>
    <property type="evidence" value="ECO:0007669"/>
    <property type="project" value="TreeGrafter"/>
</dbReference>
<dbReference type="GO" id="GO:0046914">
    <property type="term" value="F:transition metal ion binding"/>
    <property type="evidence" value="ECO:0007669"/>
    <property type="project" value="TreeGrafter"/>
</dbReference>
<dbReference type="GO" id="GO:0022857">
    <property type="term" value="F:transmembrane transporter activity"/>
    <property type="evidence" value="ECO:0007669"/>
    <property type="project" value="InterPro"/>
</dbReference>
<dbReference type="GO" id="GO:0060003">
    <property type="term" value="P:copper ion export"/>
    <property type="evidence" value="ECO:0007669"/>
    <property type="project" value="TreeGrafter"/>
</dbReference>
<dbReference type="GO" id="GO:0015679">
    <property type="term" value="P:plasma membrane copper ion transport"/>
    <property type="evidence" value="ECO:0007669"/>
    <property type="project" value="TreeGrafter"/>
</dbReference>
<dbReference type="GO" id="GO:0009636">
    <property type="term" value="P:response to toxic substance"/>
    <property type="evidence" value="ECO:0007669"/>
    <property type="project" value="UniProtKB-ARBA"/>
</dbReference>
<dbReference type="FunFam" id="2.40.420.20:FF:000003">
    <property type="entry name" value="Cation efflux system protein cusB"/>
    <property type="match status" value="1"/>
</dbReference>
<dbReference type="Gene3D" id="2.40.30.170">
    <property type="match status" value="1"/>
</dbReference>
<dbReference type="Gene3D" id="2.40.420.20">
    <property type="match status" value="1"/>
</dbReference>
<dbReference type="Gene3D" id="6.10.140.730">
    <property type="match status" value="1"/>
</dbReference>
<dbReference type="InterPro" id="IPR043602">
    <property type="entry name" value="CusB-like_dom_1"/>
</dbReference>
<dbReference type="InterPro" id="IPR032317">
    <property type="entry name" value="CusB_D23"/>
</dbReference>
<dbReference type="InterPro" id="IPR045800">
    <property type="entry name" value="HMBD"/>
</dbReference>
<dbReference type="InterPro" id="IPR051909">
    <property type="entry name" value="MFP_Cation_Efflux"/>
</dbReference>
<dbReference type="InterPro" id="IPR006143">
    <property type="entry name" value="RND_pump_MFP"/>
</dbReference>
<dbReference type="NCBIfam" id="NF007303">
    <property type="entry name" value="PRK09783.1"/>
    <property type="match status" value="1"/>
</dbReference>
<dbReference type="NCBIfam" id="TIGR01730">
    <property type="entry name" value="RND_mfp"/>
    <property type="match status" value="1"/>
</dbReference>
<dbReference type="PANTHER" id="PTHR30097">
    <property type="entry name" value="CATION EFFLUX SYSTEM PROTEIN CUSB"/>
    <property type="match status" value="1"/>
</dbReference>
<dbReference type="PANTHER" id="PTHR30097:SF15">
    <property type="entry name" value="CATION EFFLUX SYSTEM PROTEIN CUSB"/>
    <property type="match status" value="1"/>
</dbReference>
<dbReference type="Pfam" id="PF00529">
    <property type="entry name" value="CusB_dom_1"/>
    <property type="match status" value="1"/>
</dbReference>
<dbReference type="Pfam" id="PF16576">
    <property type="entry name" value="HlyD_D23"/>
    <property type="match status" value="1"/>
</dbReference>
<dbReference type="Pfam" id="PF19335">
    <property type="entry name" value="HMBD"/>
    <property type="match status" value="1"/>
</dbReference>
<dbReference type="SUPFAM" id="SSF111369">
    <property type="entry name" value="HlyD-like secretion proteins"/>
    <property type="match status" value="1"/>
</dbReference>
<comment type="function">
    <text evidence="1">Part of a cation efflux system that mediates resistance to copper and silver.</text>
</comment>
<comment type="subunit">
    <text evidence="1">The cus efflux system is composed of CusA, CusB, CusC and CusF.</text>
</comment>
<comment type="induction">
    <text evidence="3">Transcriptionally regulated by CusR in response to copper and silver ions.</text>
</comment>
<comment type="similarity">
    <text evidence="3">Belongs to the membrane fusion protein (MFP) (TC 8.A.1) family.</text>
</comment>
<feature type="signal peptide" evidence="2">
    <location>
        <begin position="1"/>
        <end position="26"/>
    </location>
</feature>
<feature type="chain" id="PRO_0000018692" description="Cation efflux system protein CusB">
    <location>
        <begin position="27"/>
        <end position="407"/>
    </location>
</feature>
<name>CUSB_ECOL6</name>
<sequence length="407" mass="44410">MKKIALIIGSMIAGGIISAAGFTWFAKEEPPAEKTSTAERKVLFWYDPMYPNTRFDKPGKSPFMDMDLVPKYADEESSASGVRIDPTQTQNLGVKTATVTRGPLTFSQSFPANVSYNEYQYAIVQARAAGFIDKVYPLTVGDKVQKGAPLLDLTIPDWVEAQSEYLLLRETGGTATQTEGILERLRLAGMPEADIRRLIATQKIQTRFTLKAPIDGVITAFDLRAGMNIAKDNVVAKIQGMDPVWVTAAIPESIAWLVKDASQFTLTVPARPDKTLTIRKWTLLPGVDAATRTLQLRLEVDNADEALKPGMNAWLQLNTASEPMLLIPSQALIDTGNEQRVITVDADGRFVPKRVAVFQASQGVTALRSGLAEGEKVVSSGLFLIDSEANISGALERMRSESATHAH</sequence>